<comment type="subcellular location">
    <subcellularLocation>
        <location evidence="1">Cell inner membrane</location>
        <topology evidence="1">Multi-pass membrane protein</topology>
    </subcellularLocation>
</comment>
<comment type="similarity">
    <text evidence="1">Belongs to the major facilitator superfamily. TCR/Tet family.</text>
</comment>
<evidence type="ECO:0000255" key="1">
    <source>
        <dbReference type="HAMAP-Rule" id="MF_01577"/>
    </source>
</evidence>
<gene>
    <name evidence="1" type="primary">mdtD</name>
    <name type="ordered locus">STY2342</name>
    <name type="ordered locus">t0743</name>
</gene>
<accession>Q8Z5F5</accession>
<accession>Q7CAY8</accession>
<dbReference type="EMBL" id="AL513382">
    <property type="protein sequence ID" value="CAD02492.1"/>
    <property type="molecule type" value="Genomic_DNA"/>
</dbReference>
<dbReference type="EMBL" id="AE014613">
    <property type="protein sequence ID" value="AAO68436.1"/>
    <property type="molecule type" value="Genomic_DNA"/>
</dbReference>
<dbReference type="RefSeq" id="NP_456675.1">
    <property type="nucleotide sequence ID" value="NC_003198.1"/>
</dbReference>
<dbReference type="RefSeq" id="WP_000134351.1">
    <property type="nucleotide sequence ID" value="NZ_WSUR01000002.1"/>
</dbReference>
<dbReference type="SMR" id="Q8Z5F5"/>
<dbReference type="STRING" id="220341.gene:17586247"/>
<dbReference type="KEGG" id="stt:t0743"/>
<dbReference type="KEGG" id="sty:STY2342"/>
<dbReference type="PATRIC" id="fig|220341.7.peg.2366"/>
<dbReference type="eggNOG" id="COG2814">
    <property type="taxonomic scope" value="Bacteria"/>
</dbReference>
<dbReference type="HOGENOM" id="CLU_000960_28_0_6"/>
<dbReference type="OMA" id="GCTMMPL"/>
<dbReference type="OrthoDB" id="9812221at2"/>
<dbReference type="Proteomes" id="UP000000541">
    <property type="component" value="Chromosome"/>
</dbReference>
<dbReference type="Proteomes" id="UP000002670">
    <property type="component" value="Chromosome"/>
</dbReference>
<dbReference type="GO" id="GO:0005886">
    <property type="term" value="C:plasma membrane"/>
    <property type="evidence" value="ECO:0007669"/>
    <property type="project" value="UniProtKB-SubCell"/>
</dbReference>
<dbReference type="GO" id="GO:0022857">
    <property type="term" value="F:transmembrane transporter activity"/>
    <property type="evidence" value="ECO:0007669"/>
    <property type="project" value="UniProtKB-UniRule"/>
</dbReference>
<dbReference type="CDD" id="cd17503">
    <property type="entry name" value="MFS_LmrB_MDR_like"/>
    <property type="match status" value="1"/>
</dbReference>
<dbReference type="FunFam" id="1.20.1250.20:FF:000021">
    <property type="entry name" value="Putative multidrug resistance protein MdtD"/>
    <property type="match status" value="1"/>
</dbReference>
<dbReference type="FunFam" id="1.20.1720.10:FF:000001">
    <property type="entry name" value="Putative multidrug resistance protein MdtD"/>
    <property type="match status" value="1"/>
</dbReference>
<dbReference type="Gene3D" id="1.20.1250.20">
    <property type="entry name" value="MFS general substrate transporter like domains"/>
    <property type="match status" value="1"/>
</dbReference>
<dbReference type="Gene3D" id="1.20.1720.10">
    <property type="entry name" value="Multidrug resistance protein D"/>
    <property type="match status" value="1"/>
</dbReference>
<dbReference type="HAMAP" id="MF_01577">
    <property type="entry name" value="MFS_MdtD"/>
    <property type="match status" value="1"/>
</dbReference>
<dbReference type="InterPro" id="IPR011701">
    <property type="entry name" value="MFS"/>
</dbReference>
<dbReference type="InterPro" id="IPR020846">
    <property type="entry name" value="MFS_dom"/>
</dbReference>
<dbReference type="InterPro" id="IPR036259">
    <property type="entry name" value="MFS_trans_sf"/>
</dbReference>
<dbReference type="InterPro" id="IPR023721">
    <property type="entry name" value="Multi-R_MdtD"/>
</dbReference>
<dbReference type="NCBIfam" id="NF007799">
    <property type="entry name" value="PRK10504.1"/>
    <property type="match status" value="1"/>
</dbReference>
<dbReference type="PANTHER" id="PTHR42718:SF46">
    <property type="entry name" value="BLR6921 PROTEIN"/>
    <property type="match status" value="1"/>
</dbReference>
<dbReference type="PANTHER" id="PTHR42718">
    <property type="entry name" value="MAJOR FACILITATOR SUPERFAMILY MULTIDRUG TRANSPORTER MFSC"/>
    <property type="match status" value="1"/>
</dbReference>
<dbReference type="Pfam" id="PF07690">
    <property type="entry name" value="MFS_1"/>
    <property type="match status" value="1"/>
</dbReference>
<dbReference type="PRINTS" id="PR01036">
    <property type="entry name" value="TCRTETB"/>
</dbReference>
<dbReference type="SUPFAM" id="SSF103473">
    <property type="entry name" value="MFS general substrate transporter"/>
    <property type="match status" value="1"/>
</dbReference>
<dbReference type="PROSITE" id="PS50850">
    <property type="entry name" value="MFS"/>
    <property type="match status" value="1"/>
</dbReference>
<protein>
    <recommendedName>
        <fullName evidence="1">Putative multidrug resistance protein MdtD</fullName>
    </recommendedName>
</protein>
<sequence length="470" mass="50784">MTEFPDNTRWQLWIVAFGFFMQSLDTTIVNTALPSMAKSLGESPLHMHMVVVSYVLTVAVMLPASGWLADKIGVRNIFFAAIVLFTLGSLFCALSGTLNQLVLARVLQGVGGAMMVPVGRLTVMKIVPRAQYMAAMTFVALPGQIGPLLGPALGGVLVEYASWHWIFLINIPVGIVGAMATFMLMPNYTIETRRFDLPGFLLLAIGMAVLTLALDGSKSMGISPWTLAGLAAGGAAAILLYLFHAKKNSGALFSLRLFRTPTFSLGLLGSFAGRIGSGMLPFMTPVFLQIGLGFSPFHAGLMMIPMVLGSMGMKRIVVQIVNRFGYRRVLVATTLGLALVSLLFMSVALLGWYYLLPLVLLLQGMVNSARFSSMNTLTLKDLPDTLASSGNSLLSMIMQLSMSIGVTIAGMLLGMFGQQHIGIDSSATHHVFMYTWLCMAVIIALPAIIFARVPNDTQQNMVISRRKRSL</sequence>
<feature type="chain" id="PRO_0000268597" description="Putative multidrug resistance protein MdtD">
    <location>
        <begin position="1"/>
        <end position="470"/>
    </location>
</feature>
<feature type="topological domain" description="Periplasmic" evidence="1">
    <location>
        <begin position="1"/>
        <end position="11"/>
    </location>
</feature>
<feature type="transmembrane region" description="Helical" evidence="1">
    <location>
        <begin position="12"/>
        <end position="32"/>
    </location>
</feature>
<feature type="topological domain" description="Cytoplasmic" evidence="1">
    <location>
        <begin position="33"/>
        <end position="48"/>
    </location>
</feature>
<feature type="transmembrane region" description="Helical" evidence="1">
    <location>
        <begin position="49"/>
        <end position="69"/>
    </location>
</feature>
<feature type="topological domain" description="Periplasmic" evidence="1">
    <location>
        <begin position="70"/>
        <end position="76"/>
    </location>
</feature>
<feature type="transmembrane region" description="Helical" evidence="1">
    <location>
        <begin position="77"/>
        <end position="97"/>
    </location>
</feature>
<feature type="topological domain" description="Cytoplasmic" evidence="1">
    <location>
        <begin position="98"/>
        <end position="101"/>
    </location>
</feature>
<feature type="transmembrane region" description="Helical" evidence="1">
    <location>
        <begin position="102"/>
        <end position="124"/>
    </location>
</feature>
<feature type="topological domain" description="Periplasmic" evidence="1">
    <location>
        <begin position="125"/>
        <end position="137"/>
    </location>
</feature>
<feature type="transmembrane region" description="Helical" evidence="1">
    <location>
        <begin position="138"/>
        <end position="158"/>
    </location>
</feature>
<feature type="topological domain" description="Cytoplasmic" evidence="1">
    <location>
        <begin position="159"/>
        <end position="164"/>
    </location>
</feature>
<feature type="transmembrane region" description="Helical" evidence="1">
    <location>
        <begin position="165"/>
        <end position="185"/>
    </location>
</feature>
<feature type="topological domain" description="Periplasmic" evidence="1">
    <location>
        <begin position="186"/>
        <end position="196"/>
    </location>
</feature>
<feature type="transmembrane region" description="Helical" evidence="1">
    <location>
        <begin position="197"/>
        <end position="217"/>
    </location>
</feature>
<feature type="topological domain" description="Cytoplasmic" evidence="1">
    <location>
        <begin position="218"/>
        <end position="224"/>
    </location>
</feature>
<feature type="transmembrane region" description="Helical" evidence="1">
    <location>
        <begin position="225"/>
        <end position="245"/>
    </location>
</feature>
<feature type="topological domain" description="Periplasmic" evidence="1">
    <location>
        <begin position="246"/>
        <end position="262"/>
    </location>
</feature>
<feature type="transmembrane region" description="Helical" evidence="1">
    <location>
        <begin position="263"/>
        <end position="283"/>
    </location>
</feature>
<feature type="topological domain" description="Cytoplasmic" evidence="1">
    <location>
        <begin position="284"/>
        <end position="285"/>
    </location>
</feature>
<feature type="transmembrane region" description="Helical" evidence="1">
    <location>
        <begin position="286"/>
        <end position="306"/>
    </location>
</feature>
<feature type="topological domain" description="Periplasmic" evidence="1">
    <location>
        <begin position="307"/>
        <end position="341"/>
    </location>
</feature>
<feature type="transmembrane region" description="Helical" evidence="1">
    <location>
        <begin position="342"/>
        <end position="362"/>
    </location>
</feature>
<feature type="topological domain" description="Cytoplasmic" evidence="1">
    <location>
        <begin position="363"/>
        <end position="395"/>
    </location>
</feature>
<feature type="transmembrane region" description="Helical" evidence="1">
    <location>
        <begin position="396"/>
        <end position="416"/>
    </location>
</feature>
<feature type="topological domain" description="Periplasmic" evidence="1">
    <location>
        <begin position="417"/>
        <end position="430"/>
    </location>
</feature>
<feature type="transmembrane region" description="Helical" evidence="1">
    <location>
        <begin position="431"/>
        <end position="451"/>
    </location>
</feature>
<feature type="topological domain" description="Cytoplasmic" evidence="1">
    <location>
        <begin position="452"/>
        <end position="470"/>
    </location>
</feature>
<reference key="1">
    <citation type="journal article" date="2001" name="Nature">
        <title>Complete genome sequence of a multiple drug resistant Salmonella enterica serovar Typhi CT18.</title>
        <authorList>
            <person name="Parkhill J."/>
            <person name="Dougan G."/>
            <person name="James K.D."/>
            <person name="Thomson N.R."/>
            <person name="Pickard D."/>
            <person name="Wain J."/>
            <person name="Churcher C.M."/>
            <person name="Mungall K.L."/>
            <person name="Bentley S.D."/>
            <person name="Holden M.T.G."/>
            <person name="Sebaihia M."/>
            <person name="Baker S."/>
            <person name="Basham D."/>
            <person name="Brooks K."/>
            <person name="Chillingworth T."/>
            <person name="Connerton P."/>
            <person name="Cronin A."/>
            <person name="Davis P."/>
            <person name="Davies R.M."/>
            <person name="Dowd L."/>
            <person name="White N."/>
            <person name="Farrar J."/>
            <person name="Feltwell T."/>
            <person name="Hamlin N."/>
            <person name="Haque A."/>
            <person name="Hien T.T."/>
            <person name="Holroyd S."/>
            <person name="Jagels K."/>
            <person name="Krogh A."/>
            <person name="Larsen T.S."/>
            <person name="Leather S."/>
            <person name="Moule S."/>
            <person name="O'Gaora P."/>
            <person name="Parry C."/>
            <person name="Quail M.A."/>
            <person name="Rutherford K.M."/>
            <person name="Simmonds M."/>
            <person name="Skelton J."/>
            <person name="Stevens K."/>
            <person name="Whitehead S."/>
            <person name="Barrell B.G."/>
        </authorList>
    </citation>
    <scope>NUCLEOTIDE SEQUENCE [LARGE SCALE GENOMIC DNA]</scope>
    <source>
        <strain>CT18</strain>
    </source>
</reference>
<reference key="2">
    <citation type="journal article" date="2003" name="J. Bacteriol.">
        <title>Comparative genomics of Salmonella enterica serovar Typhi strains Ty2 and CT18.</title>
        <authorList>
            <person name="Deng W."/>
            <person name="Liou S.-R."/>
            <person name="Plunkett G. III"/>
            <person name="Mayhew G.F."/>
            <person name="Rose D.J."/>
            <person name="Burland V."/>
            <person name="Kodoyianni V."/>
            <person name="Schwartz D.C."/>
            <person name="Blattner F.R."/>
        </authorList>
    </citation>
    <scope>NUCLEOTIDE SEQUENCE [LARGE SCALE GENOMIC DNA]</scope>
    <source>
        <strain>ATCC 700931 / Ty2</strain>
    </source>
</reference>
<keyword id="KW-0997">Cell inner membrane</keyword>
<keyword id="KW-1003">Cell membrane</keyword>
<keyword id="KW-0472">Membrane</keyword>
<keyword id="KW-0812">Transmembrane</keyword>
<keyword id="KW-1133">Transmembrane helix</keyword>
<keyword id="KW-0813">Transport</keyword>
<organism>
    <name type="scientific">Salmonella typhi</name>
    <dbReference type="NCBI Taxonomy" id="90370"/>
    <lineage>
        <taxon>Bacteria</taxon>
        <taxon>Pseudomonadati</taxon>
        <taxon>Pseudomonadota</taxon>
        <taxon>Gammaproteobacteria</taxon>
        <taxon>Enterobacterales</taxon>
        <taxon>Enterobacteriaceae</taxon>
        <taxon>Salmonella</taxon>
    </lineage>
</organism>
<name>MDTD_SALTI</name>
<proteinExistence type="inferred from homology"/>